<sequence>MSKSENLYAQAQQLIPGGVNSPVRAFTGVGGIPLFIERADGAYLFDVDGKAYIDYVGSWGPMILGHNHPAIRQAVIEAVERGLSFGAPTEMEVKMAQLVTDLVPTMDMVRMVNSGTEATMSAIRLARGYTGRDKIIKFEGCYHGHADCLLVKAGSGALTLGQPNSPGVPADFAKHTLTCTYNDLASVRQAFEQYPQEVACIIVEPVAGNMNCIPPLPEFLPGLRALCDEFGALLIIDEVMTGFRVALAGAQDYYHVIPDLTCLGKIIGGGMPVGAFGGRREVMNALAPTGPVYQAGTLSGNPIAMAAGFACLTEISQVGVYETLTELTDSLATGLRHAAKEENIPLVVNHVGGMFGLFFTNADTVTCYQDVMNCDVERFKRFFHLMLEEGVYLAPSAFEAGFMSLAHSNEDIQKTVNAARRCFAKL</sequence>
<keyword id="KW-0963">Cytoplasm</keyword>
<keyword id="KW-0413">Isomerase</keyword>
<keyword id="KW-0627">Porphyrin biosynthesis</keyword>
<keyword id="KW-0663">Pyridoxal phosphate</keyword>
<dbReference type="EC" id="5.4.3.8" evidence="1"/>
<dbReference type="EMBL" id="BX936398">
    <property type="protein sequence ID" value="CAH19982.1"/>
    <property type="molecule type" value="Genomic_DNA"/>
</dbReference>
<dbReference type="RefSeq" id="WP_011191761.1">
    <property type="nucleotide sequence ID" value="NC_006155.1"/>
</dbReference>
<dbReference type="SMR" id="Q66EF1"/>
<dbReference type="GeneID" id="49787253"/>
<dbReference type="KEGG" id="ypo:BZ17_1813"/>
<dbReference type="KEGG" id="yps:YPTB0742"/>
<dbReference type="PATRIC" id="fig|273123.14.peg.1921"/>
<dbReference type="UniPathway" id="UPA00251">
    <property type="reaction ID" value="UER00317"/>
</dbReference>
<dbReference type="Proteomes" id="UP000001011">
    <property type="component" value="Chromosome"/>
</dbReference>
<dbReference type="GO" id="GO:0005737">
    <property type="term" value="C:cytoplasm"/>
    <property type="evidence" value="ECO:0007669"/>
    <property type="project" value="UniProtKB-SubCell"/>
</dbReference>
<dbReference type="GO" id="GO:0042286">
    <property type="term" value="F:glutamate-1-semialdehyde 2,1-aminomutase activity"/>
    <property type="evidence" value="ECO:0007669"/>
    <property type="project" value="UniProtKB-UniRule"/>
</dbReference>
<dbReference type="GO" id="GO:0030170">
    <property type="term" value="F:pyridoxal phosphate binding"/>
    <property type="evidence" value="ECO:0007669"/>
    <property type="project" value="InterPro"/>
</dbReference>
<dbReference type="GO" id="GO:0008483">
    <property type="term" value="F:transaminase activity"/>
    <property type="evidence" value="ECO:0007669"/>
    <property type="project" value="InterPro"/>
</dbReference>
<dbReference type="GO" id="GO:0006782">
    <property type="term" value="P:protoporphyrinogen IX biosynthetic process"/>
    <property type="evidence" value="ECO:0007669"/>
    <property type="project" value="UniProtKB-UniRule"/>
</dbReference>
<dbReference type="CDD" id="cd00610">
    <property type="entry name" value="OAT_like"/>
    <property type="match status" value="1"/>
</dbReference>
<dbReference type="FunFam" id="3.40.640.10:FF:000021">
    <property type="entry name" value="Glutamate-1-semialdehyde 2,1-aminomutase"/>
    <property type="match status" value="1"/>
</dbReference>
<dbReference type="FunFam" id="3.90.1150.10:FF:000012">
    <property type="entry name" value="Glutamate-1-semialdehyde 2,1-aminomutase"/>
    <property type="match status" value="1"/>
</dbReference>
<dbReference type="Gene3D" id="3.90.1150.10">
    <property type="entry name" value="Aspartate Aminotransferase, domain 1"/>
    <property type="match status" value="1"/>
</dbReference>
<dbReference type="Gene3D" id="3.40.640.10">
    <property type="entry name" value="Type I PLP-dependent aspartate aminotransferase-like (Major domain)"/>
    <property type="match status" value="1"/>
</dbReference>
<dbReference type="HAMAP" id="MF_00375">
    <property type="entry name" value="HemL_aminotrans_3"/>
    <property type="match status" value="1"/>
</dbReference>
<dbReference type="InterPro" id="IPR004639">
    <property type="entry name" value="4pyrrol_synth_GluAld_NH2Trfase"/>
</dbReference>
<dbReference type="InterPro" id="IPR005814">
    <property type="entry name" value="Aminotrans_3"/>
</dbReference>
<dbReference type="InterPro" id="IPR049704">
    <property type="entry name" value="Aminotrans_3_PPA_site"/>
</dbReference>
<dbReference type="InterPro" id="IPR015424">
    <property type="entry name" value="PyrdxlP-dep_Trfase"/>
</dbReference>
<dbReference type="InterPro" id="IPR015421">
    <property type="entry name" value="PyrdxlP-dep_Trfase_major"/>
</dbReference>
<dbReference type="InterPro" id="IPR015422">
    <property type="entry name" value="PyrdxlP-dep_Trfase_small"/>
</dbReference>
<dbReference type="NCBIfam" id="TIGR00713">
    <property type="entry name" value="hemL"/>
    <property type="match status" value="1"/>
</dbReference>
<dbReference type="NCBIfam" id="NF000818">
    <property type="entry name" value="PRK00062.1"/>
    <property type="match status" value="1"/>
</dbReference>
<dbReference type="PANTHER" id="PTHR43713">
    <property type="entry name" value="GLUTAMATE-1-SEMIALDEHYDE 2,1-AMINOMUTASE"/>
    <property type="match status" value="1"/>
</dbReference>
<dbReference type="PANTHER" id="PTHR43713:SF3">
    <property type="entry name" value="GLUTAMATE-1-SEMIALDEHYDE 2,1-AMINOMUTASE 1, CHLOROPLASTIC-RELATED"/>
    <property type="match status" value="1"/>
</dbReference>
<dbReference type="Pfam" id="PF00202">
    <property type="entry name" value="Aminotran_3"/>
    <property type="match status" value="1"/>
</dbReference>
<dbReference type="SUPFAM" id="SSF53383">
    <property type="entry name" value="PLP-dependent transferases"/>
    <property type="match status" value="1"/>
</dbReference>
<dbReference type="PROSITE" id="PS00600">
    <property type="entry name" value="AA_TRANSFER_CLASS_3"/>
    <property type="match status" value="1"/>
</dbReference>
<comment type="catalytic activity">
    <reaction evidence="1">
        <text>(S)-4-amino-5-oxopentanoate = 5-aminolevulinate</text>
        <dbReference type="Rhea" id="RHEA:14265"/>
        <dbReference type="ChEBI" id="CHEBI:57501"/>
        <dbReference type="ChEBI" id="CHEBI:356416"/>
        <dbReference type="EC" id="5.4.3.8"/>
    </reaction>
</comment>
<comment type="cofactor">
    <cofactor evidence="1">
        <name>pyridoxal 5'-phosphate</name>
        <dbReference type="ChEBI" id="CHEBI:597326"/>
    </cofactor>
</comment>
<comment type="pathway">
    <text evidence="1">Porphyrin-containing compound metabolism; protoporphyrin-IX biosynthesis; 5-aminolevulinate from L-glutamyl-tRNA(Glu): step 2/2.</text>
</comment>
<comment type="subunit">
    <text evidence="1">Homodimer.</text>
</comment>
<comment type="subcellular location">
    <subcellularLocation>
        <location evidence="1">Cytoplasm</location>
    </subcellularLocation>
</comment>
<comment type="similarity">
    <text evidence="1">Belongs to the class-III pyridoxal-phosphate-dependent aminotransferase family. HemL subfamily.</text>
</comment>
<gene>
    <name evidence="1" type="primary">hemL</name>
    <name type="ordered locus">YPTB0742</name>
</gene>
<accession>Q66EF1</accession>
<proteinExistence type="inferred from homology"/>
<reference key="1">
    <citation type="journal article" date="2004" name="Proc. Natl. Acad. Sci. U.S.A.">
        <title>Insights into the evolution of Yersinia pestis through whole-genome comparison with Yersinia pseudotuberculosis.</title>
        <authorList>
            <person name="Chain P.S.G."/>
            <person name="Carniel E."/>
            <person name="Larimer F.W."/>
            <person name="Lamerdin J."/>
            <person name="Stoutland P.O."/>
            <person name="Regala W.M."/>
            <person name="Georgescu A.M."/>
            <person name="Vergez L.M."/>
            <person name="Land M.L."/>
            <person name="Motin V.L."/>
            <person name="Brubaker R.R."/>
            <person name="Fowler J."/>
            <person name="Hinnebusch J."/>
            <person name="Marceau M."/>
            <person name="Medigue C."/>
            <person name="Simonet M."/>
            <person name="Chenal-Francisque V."/>
            <person name="Souza B."/>
            <person name="Dacheux D."/>
            <person name="Elliott J.M."/>
            <person name="Derbise A."/>
            <person name="Hauser L.J."/>
            <person name="Garcia E."/>
        </authorList>
    </citation>
    <scope>NUCLEOTIDE SEQUENCE [LARGE SCALE GENOMIC DNA]</scope>
    <source>
        <strain>IP32953</strain>
    </source>
</reference>
<organism>
    <name type="scientific">Yersinia pseudotuberculosis serotype I (strain IP32953)</name>
    <dbReference type="NCBI Taxonomy" id="273123"/>
    <lineage>
        <taxon>Bacteria</taxon>
        <taxon>Pseudomonadati</taxon>
        <taxon>Pseudomonadota</taxon>
        <taxon>Gammaproteobacteria</taxon>
        <taxon>Enterobacterales</taxon>
        <taxon>Yersiniaceae</taxon>
        <taxon>Yersinia</taxon>
    </lineage>
</organism>
<evidence type="ECO:0000255" key="1">
    <source>
        <dbReference type="HAMAP-Rule" id="MF_00375"/>
    </source>
</evidence>
<protein>
    <recommendedName>
        <fullName evidence="1">Glutamate-1-semialdehyde 2,1-aminomutase</fullName>
        <shortName evidence="1">GSA</shortName>
        <ecNumber evidence="1">5.4.3.8</ecNumber>
    </recommendedName>
    <alternativeName>
        <fullName evidence="1">Glutamate-1-semialdehyde aminotransferase</fullName>
        <shortName evidence="1">GSA-AT</shortName>
    </alternativeName>
</protein>
<feature type="chain" id="PRO_0000120475" description="Glutamate-1-semialdehyde 2,1-aminomutase">
    <location>
        <begin position="1"/>
        <end position="426"/>
    </location>
</feature>
<feature type="modified residue" description="N6-(pyridoxal phosphate)lysine" evidence="1">
    <location>
        <position position="265"/>
    </location>
</feature>
<name>GSA_YERPS</name>